<keyword id="KW-0002">3D-structure</keyword>
<keyword id="KW-0025">Alternative splicing</keyword>
<keyword id="KW-0067">ATP-binding</keyword>
<keyword id="KW-0090">Biological rhythms</keyword>
<keyword id="KW-1003">Cell membrane</keyword>
<keyword id="KW-0963">Cytoplasm</keyword>
<keyword id="KW-0206">Cytoskeleton</keyword>
<keyword id="KW-0333">Golgi apparatus</keyword>
<keyword id="KW-0418">Kinase</keyword>
<keyword id="KW-0472">Membrane</keyword>
<keyword id="KW-0488">Methylation</keyword>
<keyword id="KW-0547">Nucleotide-binding</keyword>
<keyword id="KW-0539">Nucleus</keyword>
<keyword id="KW-0597">Phosphoprotein</keyword>
<keyword id="KW-1185">Reference proteome</keyword>
<keyword id="KW-0723">Serine/threonine-protein kinase</keyword>
<keyword id="KW-0808">Transferase</keyword>
<keyword id="KW-0879">Wnt signaling pathway</keyword>
<dbReference type="EC" id="2.7.11.1" evidence="7 11 12 15"/>
<dbReference type="EC" id="2.7.11.26" evidence="2"/>
<dbReference type="EMBL" id="AK004606">
    <property type="protein sequence ID" value="BAB23405.1"/>
    <property type="molecule type" value="mRNA"/>
</dbReference>
<dbReference type="EMBL" id="AK088642">
    <property type="protein sequence ID" value="BAC40472.1"/>
    <property type="molecule type" value="mRNA"/>
</dbReference>
<dbReference type="EMBL" id="AK152721">
    <property type="protein sequence ID" value="BAE31444.1"/>
    <property type="molecule type" value="mRNA"/>
</dbReference>
<dbReference type="EMBL" id="AK157812">
    <property type="protein sequence ID" value="BAE34206.1"/>
    <property type="molecule type" value="mRNA"/>
</dbReference>
<dbReference type="EMBL" id="BC004604">
    <property type="protein sequence ID" value="AAH04604.1"/>
    <property type="molecule type" value="mRNA"/>
</dbReference>
<dbReference type="CCDS" id="CCDS25762.1">
    <molecule id="Q9DC28-1"/>
</dbReference>
<dbReference type="CCDS" id="CCDS25763.1">
    <molecule id="Q9DC28-2"/>
</dbReference>
<dbReference type="PIR" id="S47616">
    <property type="entry name" value="S47616"/>
</dbReference>
<dbReference type="RefSeq" id="NP_082150.1">
    <molecule id="Q9DC28-2"/>
    <property type="nucleotide sequence ID" value="NM_027874.3"/>
</dbReference>
<dbReference type="RefSeq" id="NP_620690.1">
    <molecule id="Q9DC28-1"/>
    <property type="nucleotide sequence ID" value="NM_139059.3"/>
</dbReference>
<dbReference type="PDB" id="4JJR">
    <property type="method" value="X-ray"/>
    <property type="resolution" value="2.41 A"/>
    <property type="chains" value="A/B=1-299"/>
</dbReference>
<dbReference type="PDB" id="5X17">
    <property type="method" value="X-ray"/>
    <property type="resolution" value="2.00 A"/>
    <property type="chains" value="A/B=1-294"/>
</dbReference>
<dbReference type="PDBsum" id="4JJR"/>
<dbReference type="PDBsum" id="5X17"/>
<dbReference type="SMR" id="Q9DC28"/>
<dbReference type="BioGRID" id="222545">
    <property type="interactions" value="25"/>
</dbReference>
<dbReference type="DIP" id="DIP-47809N"/>
<dbReference type="FunCoup" id="Q9DC28">
    <property type="interactions" value="4574"/>
</dbReference>
<dbReference type="IntAct" id="Q9DC28">
    <property type="interactions" value="21"/>
</dbReference>
<dbReference type="MINT" id="Q9DC28"/>
<dbReference type="STRING" id="10090.ENSMUSP00000018274"/>
<dbReference type="ChEMBL" id="CHEMBL5175"/>
<dbReference type="GlyGen" id="Q9DC28">
    <property type="glycosylation" value="2 sites, 1 N-linked glycan (1 site), 1 O-linked glycan (1 site)"/>
</dbReference>
<dbReference type="iPTMnet" id="Q9DC28"/>
<dbReference type="PhosphoSitePlus" id="Q9DC28"/>
<dbReference type="SwissPalm" id="Q9DC28"/>
<dbReference type="jPOST" id="Q9DC28"/>
<dbReference type="PaxDb" id="10090-ENSMUSP00000018274"/>
<dbReference type="PeptideAtlas" id="Q9DC28"/>
<dbReference type="ProteomicsDB" id="263482">
    <molecule id="Q9DC28-1"/>
</dbReference>
<dbReference type="ProteomicsDB" id="263483">
    <molecule id="Q9DC28-2"/>
</dbReference>
<dbReference type="Pumba" id="Q9DC28"/>
<dbReference type="Antibodypedia" id="4210">
    <property type="antibodies" value="366 antibodies from 40 providers"/>
</dbReference>
<dbReference type="DNASU" id="104318"/>
<dbReference type="Ensembl" id="ENSMUST00000018274.10">
    <molecule id="Q9DC28-1"/>
    <property type="protein sequence ID" value="ENSMUSP00000018274.4"/>
    <property type="gene ID" value="ENSMUSG00000025162.19"/>
</dbReference>
<dbReference type="Ensembl" id="ENSMUST00000070575.14">
    <molecule id="Q9DC28-2"/>
    <property type="protein sequence ID" value="ENSMUSP00000070721.8"/>
    <property type="gene ID" value="ENSMUSG00000025162.19"/>
</dbReference>
<dbReference type="GeneID" id="104318"/>
<dbReference type="KEGG" id="mmu:104318"/>
<dbReference type="UCSC" id="uc007mvb.1">
    <molecule id="Q9DC28-1"/>
    <property type="organism name" value="mouse"/>
</dbReference>
<dbReference type="AGR" id="MGI:1355272"/>
<dbReference type="CTD" id="1453"/>
<dbReference type="MGI" id="MGI:1355272">
    <property type="gene designation" value="Csnk1d"/>
</dbReference>
<dbReference type="VEuPathDB" id="HostDB:ENSMUSG00000025162"/>
<dbReference type="eggNOG" id="KOG1164">
    <property type="taxonomic scope" value="Eukaryota"/>
</dbReference>
<dbReference type="GeneTree" id="ENSGT00940000153536"/>
<dbReference type="HOGENOM" id="CLU_019279_2_2_1"/>
<dbReference type="InParanoid" id="Q9DC28"/>
<dbReference type="OMA" id="IFDWTFL"/>
<dbReference type="OrthoDB" id="5800476at2759"/>
<dbReference type="PhylomeDB" id="Q9DC28"/>
<dbReference type="TreeFam" id="TF300544"/>
<dbReference type="BRENDA" id="2.7.11.1">
    <property type="organism ID" value="3474"/>
</dbReference>
<dbReference type="Reactome" id="R-MMU-204005">
    <property type="pathway name" value="COPII-mediated vesicle transport"/>
</dbReference>
<dbReference type="Reactome" id="R-MMU-2565942">
    <property type="pathway name" value="Regulation of PLK1 Activity at G2/M Transition"/>
</dbReference>
<dbReference type="Reactome" id="R-MMU-380259">
    <property type="pathway name" value="Loss of Nlp from mitotic centrosomes"/>
</dbReference>
<dbReference type="Reactome" id="R-MMU-380270">
    <property type="pathway name" value="Recruitment of mitotic centrosome proteins and complexes"/>
</dbReference>
<dbReference type="Reactome" id="R-MMU-380284">
    <property type="pathway name" value="Loss of proteins required for interphase microtubule organization from the centrosome"/>
</dbReference>
<dbReference type="Reactome" id="R-MMU-380320">
    <property type="pathway name" value="Recruitment of NuMA to mitotic centrosomes"/>
</dbReference>
<dbReference type="Reactome" id="R-MMU-5620912">
    <property type="pathway name" value="Anchoring of the basal body to the plasma membrane"/>
</dbReference>
<dbReference type="Reactome" id="R-MMU-6791226">
    <property type="pathway name" value="Major pathway of rRNA processing in the nucleolus and cytosol"/>
</dbReference>
<dbReference type="Reactome" id="R-MMU-8854518">
    <property type="pathway name" value="AURKA Activation by TPX2"/>
</dbReference>
<dbReference type="BioGRID-ORCS" id="104318">
    <property type="hits" value="3 hits in 82 CRISPR screens"/>
</dbReference>
<dbReference type="CD-CODE" id="CE726F99">
    <property type="entry name" value="Postsynaptic density"/>
</dbReference>
<dbReference type="ChiTaRS" id="Csnk1d">
    <property type="organism name" value="mouse"/>
</dbReference>
<dbReference type="EvolutionaryTrace" id="Q9DC28"/>
<dbReference type="PRO" id="PR:Q9DC28"/>
<dbReference type="Proteomes" id="UP000000589">
    <property type="component" value="Chromosome 11"/>
</dbReference>
<dbReference type="RNAct" id="Q9DC28">
    <property type="molecule type" value="protein"/>
</dbReference>
<dbReference type="Bgee" id="ENSMUSG00000025162">
    <property type="expression patterns" value="Expressed in paneth cell and 277 other cell types or tissues"/>
</dbReference>
<dbReference type="ExpressionAtlas" id="Q9DC28">
    <property type="expression patterns" value="baseline and differential"/>
</dbReference>
<dbReference type="GO" id="GO:0005813">
    <property type="term" value="C:centrosome"/>
    <property type="evidence" value="ECO:0007669"/>
    <property type="project" value="UniProtKB-SubCell"/>
</dbReference>
<dbReference type="GO" id="GO:0005829">
    <property type="term" value="C:cytosol"/>
    <property type="evidence" value="ECO:0000304"/>
    <property type="project" value="Reactome"/>
</dbReference>
<dbReference type="GO" id="GO:0005794">
    <property type="term" value="C:Golgi apparatus"/>
    <property type="evidence" value="ECO:0007669"/>
    <property type="project" value="UniProtKB-SubCell"/>
</dbReference>
<dbReference type="GO" id="GO:0005654">
    <property type="term" value="C:nucleoplasm"/>
    <property type="evidence" value="ECO:0000304"/>
    <property type="project" value="Reactome"/>
</dbReference>
<dbReference type="GO" id="GO:0005634">
    <property type="term" value="C:nucleus"/>
    <property type="evidence" value="ECO:0000314"/>
    <property type="project" value="UniProtKB"/>
</dbReference>
<dbReference type="GO" id="GO:0048471">
    <property type="term" value="C:perinuclear region of cytoplasm"/>
    <property type="evidence" value="ECO:0007669"/>
    <property type="project" value="UniProtKB-SubCell"/>
</dbReference>
<dbReference type="GO" id="GO:0005886">
    <property type="term" value="C:plasma membrane"/>
    <property type="evidence" value="ECO:0007669"/>
    <property type="project" value="UniProtKB-SubCell"/>
</dbReference>
<dbReference type="GO" id="GO:0005819">
    <property type="term" value="C:spindle"/>
    <property type="evidence" value="ECO:0007669"/>
    <property type="project" value="UniProtKB-SubCell"/>
</dbReference>
<dbReference type="GO" id="GO:0005524">
    <property type="term" value="F:ATP binding"/>
    <property type="evidence" value="ECO:0007669"/>
    <property type="project" value="UniProtKB-KW"/>
</dbReference>
<dbReference type="GO" id="GO:0004672">
    <property type="term" value="F:protein kinase activity"/>
    <property type="evidence" value="ECO:0000314"/>
    <property type="project" value="UniProtKB"/>
</dbReference>
<dbReference type="GO" id="GO:0106310">
    <property type="term" value="F:protein serine kinase activity"/>
    <property type="evidence" value="ECO:0007669"/>
    <property type="project" value="RHEA"/>
</dbReference>
<dbReference type="GO" id="GO:0004674">
    <property type="term" value="F:protein serine/threonine kinase activity"/>
    <property type="evidence" value="ECO:0000304"/>
    <property type="project" value="Reactome"/>
</dbReference>
<dbReference type="GO" id="GO:0032922">
    <property type="term" value="P:circadian regulation of gene expression"/>
    <property type="evidence" value="ECO:0000315"/>
    <property type="project" value="UniProtKB"/>
</dbReference>
<dbReference type="GO" id="GO:1904948">
    <property type="term" value="P:midbrain dopaminergic neuron differentiation"/>
    <property type="evidence" value="ECO:0000316"/>
    <property type="project" value="ParkinsonsUK-UCL"/>
</dbReference>
<dbReference type="GO" id="GO:1905515">
    <property type="term" value="P:non-motile cilium assembly"/>
    <property type="evidence" value="ECO:0000315"/>
    <property type="project" value="MGI"/>
</dbReference>
<dbReference type="GO" id="GO:2000052">
    <property type="term" value="P:positive regulation of non-canonical Wnt signaling pathway"/>
    <property type="evidence" value="ECO:0000316"/>
    <property type="project" value="ParkinsonsUK-UCL"/>
</dbReference>
<dbReference type="GO" id="GO:0032436">
    <property type="term" value="P:positive regulation of proteasomal ubiquitin-dependent protein catabolic process"/>
    <property type="evidence" value="ECO:0000315"/>
    <property type="project" value="UniProtKB"/>
</dbReference>
<dbReference type="GO" id="GO:0030177">
    <property type="term" value="P:positive regulation of Wnt signaling pathway"/>
    <property type="evidence" value="ECO:0000316"/>
    <property type="project" value="ParkinsonsUK-UCL"/>
</dbReference>
<dbReference type="GO" id="GO:0006468">
    <property type="term" value="P:protein phosphorylation"/>
    <property type="evidence" value="ECO:0000314"/>
    <property type="project" value="UniProtKB"/>
</dbReference>
<dbReference type="GO" id="GO:0042752">
    <property type="term" value="P:regulation of circadian rhythm"/>
    <property type="evidence" value="ECO:0000315"/>
    <property type="project" value="UniProtKB"/>
</dbReference>
<dbReference type="GO" id="GO:0016055">
    <property type="term" value="P:Wnt signaling pathway"/>
    <property type="evidence" value="ECO:0007669"/>
    <property type="project" value="UniProtKB-KW"/>
</dbReference>
<dbReference type="CDD" id="cd14125">
    <property type="entry name" value="STKc_CK1_delta_epsilon"/>
    <property type="match status" value="1"/>
</dbReference>
<dbReference type="FunFam" id="1.10.510.10:FF:000194">
    <property type="entry name" value="Casein kinase I isoform delta"/>
    <property type="match status" value="1"/>
</dbReference>
<dbReference type="FunFam" id="3.30.200.20:FF:000538">
    <property type="entry name" value="Putative Casein kinase I"/>
    <property type="match status" value="1"/>
</dbReference>
<dbReference type="Gene3D" id="1.10.510.10">
    <property type="entry name" value="Transferase(Phosphotransferase) domain 1"/>
    <property type="match status" value="1"/>
</dbReference>
<dbReference type="InterPro" id="IPR050235">
    <property type="entry name" value="CK1_Ser-Thr_kinase"/>
</dbReference>
<dbReference type="InterPro" id="IPR011009">
    <property type="entry name" value="Kinase-like_dom_sf"/>
</dbReference>
<dbReference type="InterPro" id="IPR000719">
    <property type="entry name" value="Prot_kinase_dom"/>
</dbReference>
<dbReference type="InterPro" id="IPR017441">
    <property type="entry name" value="Protein_kinase_ATP_BS"/>
</dbReference>
<dbReference type="InterPro" id="IPR008271">
    <property type="entry name" value="Ser/Thr_kinase_AS"/>
</dbReference>
<dbReference type="PANTHER" id="PTHR11909">
    <property type="entry name" value="CASEIN KINASE-RELATED"/>
    <property type="match status" value="1"/>
</dbReference>
<dbReference type="Pfam" id="PF00069">
    <property type="entry name" value="Pkinase"/>
    <property type="match status" value="1"/>
</dbReference>
<dbReference type="SMART" id="SM00220">
    <property type="entry name" value="S_TKc"/>
    <property type="match status" value="1"/>
</dbReference>
<dbReference type="SUPFAM" id="SSF56112">
    <property type="entry name" value="Protein kinase-like (PK-like)"/>
    <property type="match status" value="1"/>
</dbReference>
<dbReference type="PROSITE" id="PS00107">
    <property type="entry name" value="PROTEIN_KINASE_ATP"/>
    <property type="match status" value="1"/>
</dbReference>
<dbReference type="PROSITE" id="PS50011">
    <property type="entry name" value="PROTEIN_KINASE_DOM"/>
    <property type="match status" value="1"/>
</dbReference>
<dbReference type="PROSITE" id="PS00108">
    <property type="entry name" value="PROTEIN_KINASE_ST"/>
    <property type="match status" value="1"/>
</dbReference>
<organism>
    <name type="scientific">Mus musculus</name>
    <name type="common">Mouse</name>
    <dbReference type="NCBI Taxonomy" id="10090"/>
    <lineage>
        <taxon>Eukaryota</taxon>
        <taxon>Metazoa</taxon>
        <taxon>Chordata</taxon>
        <taxon>Craniata</taxon>
        <taxon>Vertebrata</taxon>
        <taxon>Euteleostomi</taxon>
        <taxon>Mammalia</taxon>
        <taxon>Eutheria</taxon>
        <taxon>Euarchontoglires</taxon>
        <taxon>Glires</taxon>
        <taxon>Rodentia</taxon>
        <taxon>Myomorpha</taxon>
        <taxon>Muroidea</taxon>
        <taxon>Muridae</taxon>
        <taxon>Murinae</taxon>
        <taxon>Mus</taxon>
        <taxon>Mus</taxon>
    </lineage>
</organism>
<gene>
    <name type="primary">Csnk1d</name>
    <name type="synonym">Hckid</name>
</gene>
<reference key="1">
    <citation type="journal article" date="2005" name="Science">
        <title>The transcriptional landscape of the mammalian genome.</title>
        <authorList>
            <person name="Carninci P."/>
            <person name="Kasukawa T."/>
            <person name="Katayama S."/>
            <person name="Gough J."/>
            <person name="Frith M.C."/>
            <person name="Maeda N."/>
            <person name="Oyama R."/>
            <person name="Ravasi T."/>
            <person name="Lenhard B."/>
            <person name="Wells C."/>
            <person name="Kodzius R."/>
            <person name="Shimokawa K."/>
            <person name="Bajic V.B."/>
            <person name="Brenner S.E."/>
            <person name="Batalov S."/>
            <person name="Forrest A.R."/>
            <person name="Zavolan M."/>
            <person name="Davis M.J."/>
            <person name="Wilming L.G."/>
            <person name="Aidinis V."/>
            <person name="Allen J.E."/>
            <person name="Ambesi-Impiombato A."/>
            <person name="Apweiler R."/>
            <person name="Aturaliya R.N."/>
            <person name="Bailey T.L."/>
            <person name="Bansal M."/>
            <person name="Baxter L."/>
            <person name="Beisel K.W."/>
            <person name="Bersano T."/>
            <person name="Bono H."/>
            <person name="Chalk A.M."/>
            <person name="Chiu K.P."/>
            <person name="Choudhary V."/>
            <person name="Christoffels A."/>
            <person name="Clutterbuck D.R."/>
            <person name="Crowe M.L."/>
            <person name="Dalla E."/>
            <person name="Dalrymple B.P."/>
            <person name="de Bono B."/>
            <person name="Della Gatta G."/>
            <person name="di Bernardo D."/>
            <person name="Down T."/>
            <person name="Engstrom P."/>
            <person name="Fagiolini M."/>
            <person name="Faulkner G."/>
            <person name="Fletcher C.F."/>
            <person name="Fukushima T."/>
            <person name="Furuno M."/>
            <person name="Futaki S."/>
            <person name="Gariboldi M."/>
            <person name="Georgii-Hemming P."/>
            <person name="Gingeras T.R."/>
            <person name="Gojobori T."/>
            <person name="Green R.E."/>
            <person name="Gustincich S."/>
            <person name="Harbers M."/>
            <person name="Hayashi Y."/>
            <person name="Hensch T.K."/>
            <person name="Hirokawa N."/>
            <person name="Hill D."/>
            <person name="Huminiecki L."/>
            <person name="Iacono M."/>
            <person name="Ikeo K."/>
            <person name="Iwama A."/>
            <person name="Ishikawa T."/>
            <person name="Jakt M."/>
            <person name="Kanapin A."/>
            <person name="Katoh M."/>
            <person name="Kawasawa Y."/>
            <person name="Kelso J."/>
            <person name="Kitamura H."/>
            <person name="Kitano H."/>
            <person name="Kollias G."/>
            <person name="Krishnan S.P."/>
            <person name="Kruger A."/>
            <person name="Kummerfeld S.K."/>
            <person name="Kurochkin I.V."/>
            <person name="Lareau L.F."/>
            <person name="Lazarevic D."/>
            <person name="Lipovich L."/>
            <person name="Liu J."/>
            <person name="Liuni S."/>
            <person name="McWilliam S."/>
            <person name="Madan Babu M."/>
            <person name="Madera M."/>
            <person name="Marchionni L."/>
            <person name="Matsuda H."/>
            <person name="Matsuzawa S."/>
            <person name="Miki H."/>
            <person name="Mignone F."/>
            <person name="Miyake S."/>
            <person name="Morris K."/>
            <person name="Mottagui-Tabar S."/>
            <person name="Mulder N."/>
            <person name="Nakano N."/>
            <person name="Nakauchi H."/>
            <person name="Ng P."/>
            <person name="Nilsson R."/>
            <person name="Nishiguchi S."/>
            <person name="Nishikawa S."/>
            <person name="Nori F."/>
            <person name="Ohara O."/>
            <person name="Okazaki Y."/>
            <person name="Orlando V."/>
            <person name="Pang K.C."/>
            <person name="Pavan W.J."/>
            <person name="Pavesi G."/>
            <person name="Pesole G."/>
            <person name="Petrovsky N."/>
            <person name="Piazza S."/>
            <person name="Reed J."/>
            <person name="Reid J.F."/>
            <person name="Ring B.Z."/>
            <person name="Ringwald M."/>
            <person name="Rost B."/>
            <person name="Ruan Y."/>
            <person name="Salzberg S.L."/>
            <person name="Sandelin A."/>
            <person name="Schneider C."/>
            <person name="Schoenbach C."/>
            <person name="Sekiguchi K."/>
            <person name="Semple C.A."/>
            <person name="Seno S."/>
            <person name="Sessa L."/>
            <person name="Sheng Y."/>
            <person name="Shibata Y."/>
            <person name="Shimada H."/>
            <person name="Shimada K."/>
            <person name="Silva D."/>
            <person name="Sinclair B."/>
            <person name="Sperling S."/>
            <person name="Stupka E."/>
            <person name="Sugiura K."/>
            <person name="Sultana R."/>
            <person name="Takenaka Y."/>
            <person name="Taki K."/>
            <person name="Tammoja K."/>
            <person name="Tan S.L."/>
            <person name="Tang S."/>
            <person name="Taylor M.S."/>
            <person name="Tegner J."/>
            <person name="Teichmann S.A."/>
            <person name="Ueda H.R."/>
            <person name="van Nimwegen E."/>
            <person name="Verardo R."/>
            <person name="Wei C.L."/>
            <person name="Yagi K."/>
            <person name="Yamanishi H."/>
            <person name="Zabarovsky E."/>
            <person name="Zhu S."/>
            <person name="Zimmer A."/>
            <person name="Hide W."/>
            <person name="Bult C."/>
            <person name="Grimmond S.M."/>
            <person name="Teasdale R.D."/>
            <person name="Liu E.T."/>
            <person name="Brusic V."/>
            <person name="Quackenbush J."/>
            <person name="Wahlestedt C."/>
            <person name="Mattick J.S."/>
            <person name="Hume D.A."/>
            <person name="Kai C."/>
            <person name="Sasaki D."/>
            <person name="Tomaru Y."/>
            <person name="Fukuda S."/>
            <person name="Kanamori-Katayama M."/>
            <person name="Suzuki M."/>
            <person name="Aoki J."/>
            <person name="Arakawa T."/>
            <person name="Iida J."/>
            <person name="Imamura K."/>
            <person name="Itoh M."/>
            <person name="Kato T."/>
            <person name="Kawaji H."/>
            <person name="Kawagashira N."/>
            <person name="Kawashima T."/>
            <person name="Kojima M."/>
            <person name="Kondo S."/>
            <person name="Konno H."/>
            <person name="Nakano K."/>
            <person name="Ninomiya N."/>
            <person name="Nishio T."/>
            <person name="Okada M."/>
            <person name="Plessy C."/>
            <person name="Shibata K."/>
            <person name="Shiraki T."/>
            <person name="Suzuki S."/>
            <person name="Tagami M."/>
            <person name="Waki K."/>
            <person name="Watahiki A."/>
            <person name="Okamura-Oho Y."/>
            <person name="Suzuki H."/>
            <person name="Kawai J."/>
            <person name="Hayashizaki Y."/>
        </authorList>
    </citation>
    <scope>NUCLEOTIDE SEQUENCE [LARGE SCALE MRNA] (ISOFORMS 1 AND 2)</scope>
    <source>
        <strain>C57BL/6J</strain>
        <strain>NOD</strain>
        <tissue>Bone marrow</tissue>
        <tissue>Lung</tissue>
        <tissue>Thymus</tissue>
    </source>
</reference>
<reference key="2">
    <citation type="journal article" date="2004" name="Genome Res.">
        <title>The status, quality, and expansion of the NIH full-length cDNA project: the Mammalian Gene Collection (MGC).</title>
        <authorList>
            <consortium name="The MGC Project Team"/>
        </authorList>
    </citation>
    <scope>NUCLEOTIDE SEQUENCE [LARGE SCALE MRNA] (ISOFORM 1)</scope>
</reference>
<reference key="3">
    <citation type="journal article" date="2000" name="Mol. Cell. Biol.">
        <title>Nuclear entry of the circadian regulator mPER1 is controlled by mammalian casein kinase I epsilon.</title>
        <authorList>
            <person name="Vielhaber E."/>
            <person name="Eide E."/>
            <person name="Rivers A."/>
            <person name="Gao Z.-H."/>
            <person name="Virshup D.M."/>
        </authorList>
    </citation>
    <scope>FUNCTION AS PER1 KINASE</scope>
    <scope>SUBCELLULAR LOCATION</scope>
    <scope>CATALYTIC ACTIVITY</scope>
</reference>
<reference key="4">
    <citation type="journal article" date="2001" name="Cell">
        <title>Posttranslational mechanisms regulate the mammalian circadian clock.</title>
        <authorList>
            <person name="Lee C."/>
            <person name="Etchegaray J.-P."/>
            <person name="Cagampang F.R.A."/>
            <person name="Loudon A.S.I."/>
            <person name="Reppert S.M."/>
        </authorList>
    </citation>
    <scope>IDENTIFICATION IN A COMPLEX WITH CLOCK; PER1; PER2; CRY1; CRY2; CSNK1D AND CSNK1E</scope>
</reference>
<reference key="5">
    <citation type="journal article" date="2003" name="Eur. J. Cell Biol.">
        <title>Casein kinase I delta (CKIdelta) is involved in lymphocyte physiology.</title>
        <authorList>
            <person name="Maritzen T."/>
            <person name="Loehler J."/>
            <person name="Deppert W."/>
            <person name="Knippschild U."/>
        </authorList>
    </citation>
    <scope>TISSUE SPECIFICITY</scope>
</reference>
<reference key="6">
    <citation type="journal article" date="2005" name="J. Neurosci.">
        <title>Physiological role for casein kinase 1 in glutamatergic synaptic transmission.</title>
        <authorList>
            <person name="Chergui K."/>
            <person name="Svenningsson P."/>
            <person name="Greengard P."/>
        </authorList>
    </citation>
    <scope>FUNCTION IN SYNAPTIC TRANSMISSION</scope>
</reference>
<reference key="7">
    <citation type="journal article" date="2006" name="FEBS Lett.">
        <title>Casein kinase 1 delta (CK1delta) interacts with the SNARE associated protein snapin.</title>
        <authorList>
            <person name="Wolff S."/>
            <person name="Stoeter M."/>
            <person name="Giamas G."/>
            <person name="Piesche M."/>
            <person name="Henne-Bruns D."/>
            <person name="Banting G."/>
            <person name="Knippschild U."/>
        </authorList>
    </citation>
    <scope>FUNCTION AS SNAPIN KINASE</scope>
    <scope>SUBCELLULAR LOCATION</scope>
    <scope>INTERACTION WITH SNAPIN</scope>
    <scope>CATALYTIC ACTIVITY</scope>
</reference>
<reference key="8">
    <citation type="journal article" date="2007" name="Proc. Natl. Acad. Sci. U.S.A.">
        <title>Large-scale phosphorylation analysis of mouse liver.</title>
        <authorList>
            <person name="Villen J."/>
            <person name="Beausoleil S.A."/>
            <person name="Gerber S.A."/>
            <person name="Gygi S.P."/>
        </authorList>
    </citation>
    <scope>PHOSPHORYLATION [LARGE SCALE ANALYSIS] AT SER-382</scope>
    <scope>IDENTIFICATION BY MASS SPECTROMETRY [LARGE SCALE ANALYSIS]</scope>
    <source>
        <tissue>Liver</tissue>
    </source>
</reference>
<reference key="9">
    <citation type="journal article" date="2009" name="Mol. Cell. Biol.">
        <title>Casein kinase 1 delta regulates the pace of the mammalian circadian clock.</title>
        <authorList>
            <person name="Etchegaray J.P."/>
            <person name="Machida K.K."/>
            <person name="Noton E."/>
            <person name="Constance C.M."/>
            <person name="Dallmann R."/>
            <person name="Di Napoli M.N."/>
            <person name="DeBruyne J.P."/>
            <person name="Lambert C.M."/>
            <person name="Yu E.A."/>
            <person name="Reppert S.M."/>
            <person name="Weaver D.R."/>
        </authorList>
    </citation>
    <scope>FUNCTION IN CIRCADIAN CLOCK</scope>
    <scope>DISRUPTION PHENOTYPE</scope>
    <scope>CATALYTIC ACTIVITY</scope>
    <scope>SUBCELLULAR LOCATION</scope>
</reference>
<reference key="10">
    <citation type="journal article" date="2009" name="Proc. Natl. Acad. Sci. U.S.A.">
        <title>Essential roles of CKIdelta and CKIepsilon in the mammalian circadian clock.</title>
        <authorList>
            <person name="Lee H."/>
            <person name="Chen R."/>
            <person name="Lee Y."/>
            <person name="Yoo S."/>
            <person name="Lee C."/>
        </authorList>
    </citation>
    <scope>FUNCTION IN CIRCADIAN CLOCK</scope>
    <scope>DISRUPTION PHENOTYPE</scope>
</reference>
<reference key="11">
    <citation type="journal article" date="2010" name="Biochem. J.">
        <title>The DNA-binding activity of mouse DNA methyltransferase 1 is regulated by phosphorylation with casein kinase 1delta/epsilon.</title>
        <authorList>
            <person name="Sugiyama Y."/>
            <person name="Hatano N."/>
            <person name="Sueyoshi N."/>
            <person name="Suetake I."/>
            <person name="Tajima S."/>
            <person name="Kinoshita E."/>
            <person name="Kinoshita-Kikuta E."/>
            <person name="Koike T."/>
            <person name="Kameshita I."/>
        </authorList>
    </citation>
    <scope>FUNCTION AS DNMT1 KINASE</scope>
    <scope>INTERACTION WITH DNMT1</scope>
    <scope>CATALYTIC ACTIVITY</scope>
</reference>
<reference key="12">
    <citation type="journal article" date="2010" name="Cell">
        <title>A tissue-specific atlas of mouse protein phosphorylation and expression.</title>
        <authorList>
            <person name="Huttlin E.L."/>
            <person name="Jedrychowski M.P."/>
            <person name="Elias J.E."/>
            <person name="Goswami T."/>
            <person name="Rad R."/>
            <person name="Beausoleil S.A."/>
            <person name="Villen J."/>
            <person name="Haas W."/>
            <person name="Sowa M.E."/>
            <person name="Gygi S.P."/>
        </authorList>
    </citation>
    <scope>PHOSPHORYLATION [LARGE SCALE ANALYSIS] AT SER-382 AND SER-383</scope>
    <scope>IDENTIFICATION BY MASS SPECTROMETRY [LARGE SCALE ANALYSIS]</scope>
    <source>
        <tissue>Brain</tissue>
        <tissue>Kidney</tissue>
        <tissue>Lung</tissue>
        <tissue>Pancreas</tissue>
        <tissue>Spleen</tissue>
    </source>
</reference>
<reference key="13">
    <citation type="journal article" date="2010" name="PLoS ONE">
        <title>Casein kinase 1 delta (CK1delta) regulates period length of the mouse suprachiasmatic circadian clock in vitro.</title>
        <authorList>
            <person name="Etchegaray J.-P."/>
            <person name="Yu E.A."/>
            <person name="Indic P."/>
            <person name="Dallmann R."/>
            <person name="Weaver D.R."/>
        </authorList>
    </citation>
    <scope>FUNCTION IN CIRCADIAN CLOCK</scope>
</reference>
<reference key="14">
    <citation type="journal article" date="2010" name="Proc. Natl. Acad. Sci. U.S.A.">
        <title>Forebrain overexpression of CK1delta leads to down-regulation of dopamine receptors and altered locomotor activity reminiscent of ADHD.</title>
        <authorList>
            <person name="Zhou M."/>
            <person name="Rebholz H."/>
            <person name="Brocia C."/>
            <person name="Warner-Schmidt J.L."/>
            <person name="Fienberg A.A."/>
            <person name="Nairn A.C."/>
            <person name="Greengard P."/>
            <person name="Flajolet M."/>
        </authorList>
    </citation>
    <scope>FUNCTION IN DOPAMINE RECEPTORS</scope>
</reference>
<reference key="15">
    <citation type="journal article" date="2011" name="Proc. Natl. Acad. Sci. U.S.A.">
        <title>The period of the circadian oscillator is primarily determined by the balance between casein kinase 1 and protein phosphatase 1.</title>
        <authorList>
            <person name="Lee H.M."/>
            <person name="Chen R."/>
            <person name="Kim H."/>
            <person name="Etchegaray J.P."/>
            <person name="Weaver D.R."/>
            <person name="Lee C."/>
        </authorList>
    </citation>
    <scope>FUNCTION IN CIRCADIAN CLOCK</scope>
    <scope>DEPHOSPHORYLATION</scope>
</reference>
<reference key="16">
    <citation type="journal article" date="2013" name="Sci. Transl. Med.">
        <title>Casein kinase idelta mutations in familial migraine and advanced phase.</title>
        <authorList>
            <person name="Brennan K.C."/>
            <person name="Bates E.A."/>
            <person name="Shapiro R.E."/>
            <person name="Zyuzin J."/>
            <person name="Hallows W.C."/>
            <person name="Huang Y."/>
            <person name="Lee H.Y."/>
            <person name="Jones C.R."/>
            <person name="Fu Y.H."/>
            <person name="Charles A.C."/>
            <person name="Ptacek L.J."/>
        </authorList>
    </citation>
    <scope>MUTAGENESIS OF THR-44</scope>
</reference>
<reference key="17">
    <citation type="journal article" date="2014" name="Mol. Cell. Proteomics">
        <title>Immunoaffinity enrichment and mass spectrometry analysis of protein methylation.</title>
        <authorList>
            <person name="Guo A."/>
            <person name="Gu H."/>
            <person name="Zhou J."/>
            <person name="Mulhern D."/>
            <person name="Wang Y."/>
            <person name="Lee K.A."/>
            <person name="Yang V."/>
            <person name="Aguiar M."/>
            <person name="Kornhauser J."/>
            <person name="Jia X."/>
            <person name="Ren J."/>
            <person name="Beausoleil S.A."/>
            <person name="Silva J.C."/>
            <person name="Vemulapalli V."/>
            <person name="Bedford M.T."/>
            <person name="Comb M.J."/>
        </authorList>
    </citation>
    <scope>METHYLATION [LARGE SCALE ANALYSIS] AT ARG-375</scope>
    <scope>IDENTIFICATION BY MASS SPECTROMETRY [LARGE SCALE ANALYSIS]</scope>
    <source>
        <tissue>Brain</tissue>
    </source>
</reference>
<reference key="18">
    <citation type="journal article" date="2018" name="J. Biol. Chem.">
        <title>Phosphorylation of human enhancer filamentation 1 (HEF1) stimulates interaction with Polo-like kinase 1 leading to HEF1 localization to focal adhesions.</title>
        <authorList>
            <person name="Lee K.H."/>
            <person name="Hwang J.A."/>
            <person name="Kim S.O."/>
            <person name="Kim J.H."/>
            <person name="Shin S.C."/>
            <person name="Kim E.E."/>
            <person name="Lee K.S."/>
            <person name="Rhee K."/>
            <person name="Jeon B.H."/>
            <person name="Bang J.K."/>
            <person name="Cha-Molstad H."/>
            <person name="Soung N.K."/>
            <person name="Jang J.H."/>
            <person name="Ko S.K."/>
            <person name="Lee H.G."/>
            <person name="Ahn J.S."/>
            <person name="Kwon Y.T."/>
            <person name="Kim B.Y."/>
        </authorList>
    </citation>
    <scope>FUNCTION</scope>
    <scope>MUTAGENESIS OF LYS-38</scope>
</reference>
<protein>
    <recommendedName>
        <fullName>Casein kinase I isoform delta</fullName>
        <shortName>CKI-delta</shortName>
        <shortName>CKId</shortName>
        <ecNumber evidence="7 11 12 15">2.7.11.1</ecNumber>
    </recommendedName>
    <alternativeName>
        <fullName>Tau-protein kinase CSNK1D</fullName>
        <ecNumber evidence="2">2.7.11.26</ecNumber>
    </alternativeName>
</protein>
<name>KC1D_MOUSE</name>
<accession>Q9DC28</accession>
<accession>Q3TZK2</accession>
<accession>Q99KK4</accession>
<comment type="function">
    <text evidence="7 10 11 12 13 14 15 16 17 19">Essential serine/threonine-protein kinase that regulates diverse cellular growth and survival processes including Wnt signaling, DNA repair and circadian rhythms. It can phosphorylate a large number of proteins. Casein kinases are operationally defined by their preferential utilization of acidic proteins such as caseins as substrates. Phosphorylates connexin-43/GJA1, MAP1A, SNAPIN, MAPT/TAU, TOP2A, DCK, HIF1A, EIF6, p53/TP53, DVL2, DVL3, ESR1, AIB1/NCOA3, DNMT1, PKD2, YAP1, PER1 and PER2. Central component of the circadian clock. In balance with PP1, determines the circadian period length through the regulation of the speed and rhythmicity of PER1 and PER2 phosphorylation. Controls PER1 and PER2 nuclear transport and degradation. YAP1 phosphorylation promotes its SCF(beta-TRCP) E3 ubiquitin ligase-mediated ubiquitination and subsequent degradation. DNMT1 phosphorylation reduces its DNA-binding activity. Phosphorylation of ESR1 and AIB1/NCOA3 stimulates their activity and coactivation. Phosphorylation of DVL2 and DVL3 regulates WNT3A signaling pathway that controls neurite outgrowth. Phosphorylates NEDD9/HEF1 (PubMed:29191835). EIF6 phosphorylation promotes its nuclear export. Triggers down-regulation of dopamine receptors in the forebrain. Activates DCK in vitro by phosphorylation. TOP2A phosphorylation favors DNA cleavable complex formation. May regulate the formation of the mitotic spindle apparatus in extravillous trophoblast. Modulates connexin-43/GJA1 gap junction assembly by phosphorylation. Probably involved in lymphocyte physiology. Regulates fast synaptic transmission mediated by glutamate.</text>
</comment>
<comment type="catalytic activity">
    <reaction evidence="7 11 12 15">
        <text>L-seryl-[protein] + ATP = O-phospho-L-seryl-[protein] + ADP + H(+)</text>
        <dbReference type="Rhea" id="RHEA:17989"/>
        <dbReference type="Rhea" id="RHEA-COMP:9863"/>
        <dbReference type="Rhea" id="RHEA-COMP:11604"/>
        <dbReference type="ChEBI" id="CHEBI:15378"/>
        <dbReference type="ChEBI" id="CHEBI:29999"/>
        <dbReference type="ChEBI" id="CHEBI:30616"/>
        <dbReference type="ChEBI" id="CHEBI:83421"/>
        <dbReference type="ChEBI" id="CHEBI:456216"/>
        <dbReference type="EC" id="2.7.11.1"/>
    </reaction>
    <physiologicalReaction direction="left-to-right" evidence="22">
        <dbReference type="Rhea" id="RHEA:17990"/>
    </physiologicalReaction>
</comment>
<comment type="catalytic activity">
    <reaction evidence="7 11 12 15">
        <text>L-threonyl-[protein] + ATP = O-phospho-L-threonyl-[protein] + ADP + H(+)</text>
        <dbReference type="Rhea" id="RHEA:46608"/>
        <dbReference type="Rhea" id="RHEA-COMP:11060"/>
        <dbReference type="Rhea" id="RHEA-COMP:11605"/>
        <dbReference type="ChEBI" id="CHEBI:15378"/>
        <dbReference type="ChEBI" id="CHEBI:30013"/>
        <dbReference type="ChEBI" id="CHEBI:30616"/>
        <dbReference type="ChEBI" id="CHEBI:61977"/>
        <dbReference type="ChEBI" id="CHEBI:456216"/>
        <dbReference type="EC" id="2.7.11.1"/>
    </reaction>
    <physiologicalReaction direction="left-to-right" evidence="22">
        <dbReference type="Rhea" id="RHEA:46609"/>
    </physiologicalReaction>
</comment>
<comment type="catalytic activity">
    <reaction evidence="2">
        <text>L-seryl-[tau protein] + ATP = O-phospho-L-seryl-[tau protein] + ADP + H(+)</text>
        <dbReference type="Rhea" id="RHEA:12801"/>
        <dbReference type="Rhea" id="RHEA-COMP:13701"/>
        <dbReference type="Rhea" id="RHEA-COMP:13702"/>
        <dbReference type="ChEBI" id="CHEBI:15378"/>
        <dbReference type="ChEBI" id="CHEBI:29999"/>
        <dbReference type="ChEBI" id="CHEBI:30616"/>
        <dbReference type="ChEBI" id="CHEBI:83421"/>
        <dbReference type="ChEBI" id="CHEBI:456216"/>
        <dbReference type="EC" id="2.7.11.26"/>
    </reaction>
    <physiologicalReaction direction="left-to-right" evidence="2">
        <dbReference type="Rhea" id="RHEA:12802"/>
    </physiologicalReaction>
</comment>
<comment type="catalytic activity">
    <reaction evidence="2">
        <text>L-threonyl-[tau protein] + ATP = O-phospho-L-threonyl-[tau protein] + ADP + H(+)</text>
        <dbReference type="Rhea" id="RHEA:53904"/>
        <dbReference type="Rhea" id="RHEA-COMP:13703"/>
        <dbReference type="Rhea" id="RHEA-COMP:13704"/>
        <dbReference type="ChEBI" id="CHEBI:15378"/>
        <dbReference type="ChEBI" id="CHEBI:30013"/>
        <dbReference type="ChEBI" id="CHEBI:30616"/>
        <dbReference type="ChEBI" id="CHEBI:61977"/>
        <dbReference type="ChEBI" id="CHEBI:456216"/>
        <dbReference type="EC" id="2.7.11.26"/>
    </reaction>
    <physiologicalReaction direction="left-to-right" evidence="2">
        <dbReference type="Rhea" id="RHEA:53905"/>
    </physiologicalReaction>
</comment>
<comment type="activity regulation">
    <text evidence="2">Exhibits substrate-dependent heparin activation. Drug-mediated inhibition leads to a delay of the oscillations with the magnitude of this effect dependent upon the timing of drug administration. Inhibited by phosphorylation (By similarity).</text>
</comment>
<comment type="subunit">
    <text evidence="2 3 8 11 15">Monomer (By similarity). Component of the circadian core oscillator, which includes the CRY proteins, CLOCK, or NPAS2, BMAL1 or BMAL2, CSNK1D and/or CSNK1E, TIMELESS and the PER proteins (PubMed:11779462). Interacts directly with PER1 and PER2 which may lead to their degradation (By similarity). Interacts with MAP1A (By similarity). Interacts with MAPT/TAU, DBNDD2, AIB1/NCOA3 and ESR1 (By similarity). Interacts with AKAP9/AKAP450; this interaction promotes centrosomal subcellular location (By similarity). Binds to tubulins in mitotic cells upon DNA damage (By similarity). Interacts with GJA1 (By similarity). Interacts with SNAPIN (PubMed:17101137). Interacts with DNMT1 (PubMed:20192920). Interacts with DDX3X; this interaction enhances CSNK1D kinase activity in vitro, but it is unclear whether this interaction is physiologically relevant (By similarity). Interacts with FAM83A, FAM83B, FAM83E and FAM83H (via DUF1669) (By similarity).</text>
</comment>
<comment type="subcellular location">
    <subcellularLocation>
        <location evidence="1">Cytoplasm</location>
    </subcellularLocation>
    <subcellularLocation>
        <location evidence="7 11 12">Nucleus</location>
    </subcellularLocation>
    <subcellularLocation>
        <location evidence="1">Cytoplasm</location>
        <location evidence="1">Cytoskeleton</location>
        <location evidence="1">Microtubule organizing center</location>
        <location evidence="1">Centrosome</location>
    </subcellularLocation>
    <subcellularLocation>
        <location evidence="1">Cytoplasm</location>
        <location evidence="1">Perinuclear region</location>
    </subcellularLocation>
    <subcellularLocation>
        <location evidence="1">Cell membrane</location>
    </subcellularLocation>
    <subcellularLocation>
        <location evidence="1">Cytoplasm</location>
        <location evidence="1">Cytoskeleton</location>
        <location evidence="1">Spindle</location>
    </subcellularLocation>
    <subcellularLocation>
        <location evidence="1">Golgi apparatus</location>
    </subcellularLocation>
    <text evidence="1">Localized at mitotic spindle microtubules, and at the centrosomes and interphase in interphase cells. Recruited to the spindle apparatus and the centrosomes in response to DNA-damage. Correct subcellular localization requires kinase activity (By similarity).</text>
</comment>
<comment type="alternative products">
    <event type="alternative splicing"/>
    <isoform>
        <id>Q9DC28-1</id>
        <name>1</name>
        <sequence type="displayed"/>
    </isoform>
    <isoform>
        <id>Q9DC28-2</id>
        <name>2</name>
        <sequence type="described" ref="VSP_010254"/>
    </isoform>
</comment>
<comment type="tissue specificity">
    <text evidence="9">Expressed ubiquitously. However, kinase activity is not uniform, with highest kinase activity in splenocytes.</text>
</comment>
<comment type="PTM">
    <text>Autophosphorylated on serine and threonine residues; this autophosphorylation represses activity. Reactivated by phosphatase-mediated dephosphorylation. May be dephosphorylated by PP1.</text>
</comment>
<comment type="disruption phenotype">
    <text evidence="12 13">Lethal. There are fewer embryos than expected at late stages of gestation; they weigh about 30% less than control animals, but appear otherwise normal. Mice die shortly after birth. Tissue-specific disruption increases the half-life of PER2 protein and alters circadian protein expression dynamics.</text>
</comment>
<comment type="similarity">
    <text evidence="21">Belongs to the protein kinase superfamily. CK1 Ser/Thr protein kinase family. Casein kinase I subfamily.</text>
</comment>
<evidence type="ECO:0000250" key="1"/>
<evidence type="ECO:0000250" key="2">
    <source>
        <dbReference type="UniProtKB" id="P48730"/>
    </source>
</evidence>
<evidence type="ECO:0000250" key="3">
    <source>
        <dbReference type="UniProtKB" id="Q06486"/>
    </source>
</evidence>
<evidence type="ECO:0000255" key="4">
    <source>
        <dbReference type="PROSITE-ProRule" id="PRU00159"/>
    </source>
</evidence>
<evidence type="ECO:0000255" key="5">
    <source>
        <dbReference type="PROSITE-ProRule" id="PRU10027"/>
    </source>
</evidence>
<evidence type="ECO:0000256" key="6">
    <source>
        <dbReference type="SAM" id="MobiDB-lite"/>
    </source>
</evidence>
<evidence type="ECO:0000269" key="7">
    <source>
    </source>
</evidence>
<evidence type="ECO:0000269" key="8">
    <source>
    </source>
</evidence>
<evidence type="ECO:0000269" key="9">
    <source>
    </source>
</evidence>
<evidence type="ECO:0000269" key="10">
    <source>
    </source>
</evidence>
<evidence type="ECO:0000269" key="11">
    <source>
    </source>
</evidence>
<evidence type="ECO:0000269" key="12">
    <source>
    </source>
</evidence>
<evidence type="ECO:0000269" key="13">
    <source>
    </source>
</evidence>
<evidence type="ECO:0000269" key="14">
    <source>
    </source>
</evidence>
<evidence type="ECO:0000269" key="15">
    <source>
    </source>
</evidence>
<evidence type="ECO:0000269" key="16">
    <source>
    </source>
</evidence>
<evidence type="ECO:0000269" key="17">
    <source>
    </source>
</evidence>
<evidence type="ECO:0000269" key="18">
    <source>
    </source>
</evidence>
<evidence type="ECO:0000269" key="19">
    <source>
    </source>
</evidence>
<evidence type="ECO:0000303" key="20">
    <source>
    </source>
</evidence>
<evidence type="ECO:0000305" key="21"/>
<evidence type="ECO:0000305" key="22">
    <source>
    </source>
</evidence>
<evidence type="ECO:0007744" key="23">
    <source>
    </source>
</evidence>
<evidence type="ECO:0007744" key="24">
    <source>
    </source>
</evidence>
<evidence type="ECO:0007744" key="25">
    <source>
    </source>
</evidence>
<evidence type="ECO:0007829" key="26">
    <source>
        <dbReference type="PDB" id="4JJR"/>
    </source>
</evidence>
<evidence type="ECO:0007829" key="27">
    <source>
        <dbReference type="PDB" id="5X17"/>
    </source>
</evidence>
<sequence>MELRVGNRYRLGRKIGSGSFGDIYLGTDIAAGEEVAIKLECVKTKHPQLHIESKIYKMMQGGVGIPTIRWCGAEGDYNVMVMELLGPSLEDLFNFCSRKFSLKTVLLLADQMISRIEYIHSKNFIHRDVKPDNFLMGLGKKGNLVYIIDFGLAKKYRDARTHQHIPYRENKNLTGTARYASINTHLGIEQSRRDDLESLGYVLMYFNLGSLPWQGLKAATKRQKYERISEKKMSTPIEVLCKGYPSEFATYLNFCRSLRFDDKPDYSYLRQLFRNLFHRQGFSYDYVFDWNMLKFGASRAADDAERERRDREERLRHSRNPATRGLPSTASGRLRGTQEVAPPTPLTPTSHTANTSPRPVSGMERERKVSMRLHRGAPVNVSSSDLTGRQDTSRMSTSQIPGRVASSGLQSVVHR</sequence>
<feature type="chain" id="PRO_0000192834" description="Casein kinase I isoform delta">
    <location>
        <begin position="1"/>
        <end position="415"/>
    </location>
</feature>
<feature type="domain" description="Protein kinase" evidence="4">
    <location>
        <begin position="9"/>
        <end position="277"/>
    </location>
</feature>
<feature type="region of interest" description="Centrosomal localization signal (CLS)" evidence="1">
    <location>
        <begin position="278"/>
        <end position="364"/>
    </location>
</feature>
<feature type="region of interest" description="Disordered" evidence="6">
    <location>
        <begin position="301"/>
        <end position="415"/>
    </location>
</feature>
<feature type="region of interest" description="Autoinhibitory" evidence="1">
    <location>
        <begin position="317"/>
        <end position="342"/>
    </location>
</feature>
<feature type="compositionally biased region" description="Basic and acidic residues" evidence="6">
    <location>
        <begin position="301"/>
        <end position="315"/>
    </location>
</feature>
<feature type="compositionally biased region" description="Polar residues" evidence="6">
    <location>
        <begin position="347"/>
        <end position="358"/>
    </location>
</feature>
<feature type="compositionally biased region" description="Polar residues" evidence="6">
    <location>
        <begin position="380"/>
        <end position="400"/>
    </location>
</feature>
<feature type="active site" description="Proton acceptor" evidence="4 5">
    <location>
        <position position="128"/>
    </location>
</feature>
<feature type="binding site" evidence="4">
    <location>
        <begin position="15"/>
        <end position="23"/>
    </location>
    <ligand>
        <name>ATP</name>
        <dbReference type="ChEBI" id="CHEBI:30616"/>
    </ligand>
</feature>
<feature type="binding site" evidence="4">
    <location>
        <position position="38"/>
    </location>
    <ligand>
        <name>ATP</name>
        <dbReference type="ChEBI" id="CHEBI:30616"/>
    </ligand>
</feature>
<feature type="modified residue" description="Phosphoserine" evidence="2">
    <location>
        <position position="328"/>
    </location>
</feature>
<feature type="modified residue" description="Phosphoserine" evidence="2">
    <location>
        <position position="331"/>
    </location>
</feature>
<feature type="modified residue" description="Phosphoserine" evidence="3">
    <location>
        <position position="370"/>
    </location>
</feature>
<feature type="modified residue" description="Omega-N-methylarginine" evidence="25">
    <location>
        <position position="375"/>
    </location>
</feature>
<feature type="modified residue" description="Phosphoserine" evidence="23 24">
    <location>
        <position position="382"/>
    </location>
</feature>
<feature type="modified residue" description="Phosphoserine" evidence="24">
    <location>
        <position position="383"/>
    </location>
</feature>
<feature type="modified residue" description="Phosphoserine" evidence="2">
    <location>
        <position position="384"/>
    </location>
</feature>
<feature type="modified residue" description="Phosphoserine" evidence="2">
    <location>
        <position position="407"/>
    </location>
</feature>
<feature type="modified residue" description="Phosphoserine" evidence="2">
    <location>
        <position position="411"/>
    </location>
</feature>
<feature type="splice variant" id="VSP_010254" description="In isoform 2." evidence="20">
    <original>IPGRVASSGLQSVVHR</original>
    <variation>NSIPFEHHGK</variation>
    <location>
        <begin position="400"/>
        <end position="415"/>
    </location>
</feature>
<feature type="mutagenesis site" description="Abolishes NEDD9 phosphorylation." evidence="19">
    <original>K</original>
    <variation>M</variation>
    <location>
        <position position="38"/>
    </location>
</feature>
<feature type="mutagenesis site" description="Increases pain sensitivity; reduces threshold for induction of cortical spreading depression; increases arterial dilation during cortical spreading depression and increases spontaneous and evoked calcium signaling in astrocytes." evidence="18">
    <original>T</original>
    <variation>A</variation>
    <location>
        <position position="44"/>
    </location>
</feature>
<feature type="sequence conflict" description="In Ref. 1; BAB23405." evidence="21" ref="1">
    <original>E</original>
    <variation>G</variation>
    <location>
        <position position="313"/>
    </location>
</feature>
<feature type="turn" evidence="27">
    <location>
        <begin position="6"/>
        <end position="8"/>
    </location>
</feature>
<feature type="strand" evidence="27">
    <location>
        <begin position="9"/>
        <end position="16"/>
    </location>
</feature>
<feature type="strand" evidence="27">
    <location>
        <begin position="19"/>
        <end position="28"/>
    </location>
</feature>
<feature type="turn" evidence="27">
    <location>
        <begin position="29"/>
        <end position="32"/>
    </location>
</feature>
<feature type="strand" evidence="27">
    <location>
        <begin position="33"/>
        <end position="41"/>
    </location>
</feature>
<feature type="helix" evidence="27">
    <location>
        <begin position="49"/>
        <end position="58"/>
    </location>
</feature>
<feature type="turn" evidence="27">
    <location>
        <begin position="59"/>
        <end position="61"/>
    </location>
</feature>
<feature type="strand" evidence="27">
    <location>
        <begin position="68"/>
        <end position="74"/>
    </location>
</feature>
<feature type="strand" evidence="27">
    <location>
        <begin position="77"/>
        <end position="83"/>
    </location>
</feature>
<feature type="helix" evidence="27">
    <location>
        <begin position="89"/>
        <end position="95"/>
    </location>
</feature>
<feature type="turn" evidence="27">
    <location>
        <begin position="96"/>
        <end position="98"/>
    </location>
</feature>
<feature type="helix" evidence="27">
    <location>
        <begin position="102"/>
        <end position="121"/>
    </location>
</feature>
<feature type="helix" evidence="27">
    <location>
        <begin position="131"/>
        <end position="133"/>
    </location>
</feature>
<feature type="strand" evidence="27">
    <location>
        <begin position="134"/>
        <end position="136"/>
    </location>
</feature>
<feature type="helix" evidence="27">
    <location>
        <begin position="139"/>
        <end position="141"/>
    </location>
</feature>
<feature type="strand" evidence="27">
    <location>
        <begin position="145"/>
        <end position="147"/>
    </location>
</feature>
<feature type="turn" evidence="27">
    <location>
        <begin position="159"/>
        <end position="161"/>
    </location>
</feature>
<feature type="helix" evidence="27">
    <location>
        <begin position="177"/>
        <end position="179"/>
    </location>
</feature>
<feature type="helix" evidence="27">
    <location>
        <begin position="182"/>
        <end position="185"/>
    </location>
</feature>
<feature type="helix" evidence="27">
    <location>
        <begin position="192"/>
        <end position="208"/>
    </location>
</feature>
<feature type="turn" evidence="27">
    <location>
        <begin position="212"/>
        <end position="215"/>
    </location>
</feature>
<feature type="helix" evidence="27">
    <location>
        <begin position="221"/>
        <end position="233"/>
    </location>
</feature>
<feature type="helix" evidence="27">
    <location>
        <begin position="237"/>
        <end position="240"/>
    </location>
</feature>
<feature type="turn" evidence="27">
    <location>
        <begin position="241"/>
        <end position="243"/>
    </location>
</feature>
<feature type="helix" evidence="27">
    <location>
        <begin position="247"/>
        <end position="257"/>
    </location>
</feature>
<feature type="helix" evidence="27">
    <location>
        <begin position="266"/>
        <end position="279"/>
    </location>
</feature>
<feature type="helix" evidence="27">
    <location>
        <begin position="289"/>
        <end position="291"/>
    </location>
</feature>
<feature type="strand" evidence="26">
    <location>
        <begin position="295"/>
        <end position="297"/>
    </location>
</feature>
<feature type="modified residue" description="Phosphoserine" evidence="1">
    <location sequence="Q9DC28-2">
        <position position="401"/>
    </location>
</feature>
<proteinExistence type="evidence at protein level"/>